<keyword id="KW-0066">ATP synthesis</keyword>
<keyword id="KW-0067">ATP-binding</keyword>
<keyword id="KW-0139">CF(1)</keyword>
<keyword id="KW-0150">Chloroplast</keyword>
<keyword id="KW-0375">Hydrogen ion transport</keyword>
<keyword id="KW-0406">Ion transport</keyword>
<keyword id="KW-0472">Membrane</keyword>
<keyword id="KW-0547">Nucleotide-binding</keyword>
<keyword id="KW-0934">Plastid</keyword>
<keyword id="KW-0793">Thylakoid</keyword>
<keyword id="KW-1278">Translocase</keyword>
<keyword id="KW-0813">Transport</keyword>
<reference key="1">
    <citation type="journal article" date="2005" name="BMC Biol.">
        <title>The complete chloroplast DNA sequences of the charophycean green algae Staurastrum and Zygnema reveal that the chloroplast genome underwent extensive changes during the evolution of the Zygnematales.</title>
        <authorList>
            <person name="Turmel M."/>
            <person name="Otis C."/>
            <person name="Lemieux C."/>
        </authorList>
    </citation>
    <scope>NUCLEOTIDE SEQUENCE [LARGE SCALE GENOMIC DNA]</scope>
</reference>
<geneLocation type="chloroplast"/>
<feature type="chain" id="PRO_0000254528" description="ATP synthase subunit beta, chloroplastic">
    <location>
        <begin position="1"/>
        <end position="493"/>
    </location>
</feature>
<feature type="binding site" evidence="1">
    <location>
        <begin position="170"/>
        <end position="177"/>
    </location>
    <ligand>
        <name>ATP</name>
        <dbReference type="ChEBI" id="CHEBI:30616"/>
    </ligand>
</feature>
<evidence type="ECO:0000255" key="1">
    <source>
        <dbReference type="HAMAP-Rule" id="MF_01347"/>
    </source>
</evidence>
<accession>Q32RY8</accession>
<organism>
    <name type="scientific">Staurastrum punctulatum</name>
    <name type="common">Green alga</name>
    <name type="synonym">Cosmoastrum punctulatum</name>
    <dbReference type="NCBI Taxonomy" id="102822"/>
    <lineage>
        <taxon>Eukaryota</taxon>
        <taxon>Viridiplantae</taxon>
        <taxon>Streptophyta</taxon>
        <taxon>Zygnematophyceae</taxon>
        <taxon>Zygnematophycidae</taxon>
        <taxon>Desmidiales</taxon>
        <taxon>Desmidiaceae</taxon>
        <taxon>Staurastrum</taxon>
    </lineage>
</organism>
<gene>
    <name evidence="1" type="primary">atpB</name>
</gene>
<proteinExistence type="inferred from homology"/>
<protein>
    <recommendedName>
        <fullName evidence="1">ATP synthase subunit beta, chloroplastic</fullName>
        <ecNumber evidence="1">7.1.2.2</ecNumber>
    </recommendedName>
    <alternativeName>
        <fullName evidence="1">ATP synthase F1 sector subunit beta</fullName>
    </alternativeName>
    <alternativeName>
        <fullName evidence="1">F-ATPase subunit beta</fullName>
    </alternativeName>
</protein>
<sequence>MKTSFFSLGASTVTTKNVGRITQIIGPVLDAAFLPGQMPNIYNAIIVKGQNPAGQEINVTCEVQQLLGDNRVRAVAMSATDGLTRGMEVFDTGAPLSVPVGEVTLGRIFNVLGEPVDELGPVNATITSVIHRSAPAFTQLDTKLSIFETGIKVVDLLAPYRRGGKIGLFGGAGVGKTVLIMELINNIAKAHGGVSVFGGVGERTREGNDLYMEMKESKVINEENLSESKVALVYGQMNEPPGARMRVGLTALTMAEYFRDVNKQDVLLFIDNIFRFVQAGSEVSALLGRMPSAVGYQPTLGTEMGGLQERITSTKEGSITSIQAVYVPADDLTDPAPATTFAHLDATTVLSRGLAAKGIYPAVDPLDSTSTMLQPWIVGAEHYETAQGVKKTLQRYKELQDIIAILGLDELSEDDRLTVARARKIERFLSQPFFVAEVFTGSPGKYVSLAETIKGFQMILSGELDHLPEQAFYLVGNIDEATAKAATIQVESA</sequence>
<name>ATPB_STAPU</name>
<dbReference type="EC" id="7.1.2.2" evidence="1"/>
<dbReference type="EMBL" id="AY958085">
    <property type="protein sequence ID" value="AAX45683.1"/>
    <property type="molecule type" value="Genomic_DNA"/>
</dbReference>
<dbReference type="RefSeq" id="YP_636388.1">
    <property type="nucleotide sequence ID" value="NC_008116.1"/>
</dbReference>
<dbReference type="SMR" id="Q32RY8"/>
<dbReference type="GeneID" id="4108574"/>
<dbReference type="GO" id="GO:0009535">
    <property type="term" value="C:chloroplast thylakoid membrane"/>
    <property type="evidence" value="ECO:0007669"/>
    <property type="project" value="UniProtKB-SubCell"/>
</dbReference>
<dbReference type="GO" id="GO:0005739">
    <property type="term" value="C:mitochondrion"/>
    <property type="evidence" value="ECO:0007669"/>
    <property type="project" value="GOC"/>
</dbReference>
<dbReference type="GO" id="GO:0045259">
    <property type="term" value="C:proton-transporting ATP synthase complex"/>
    <property type="evidence" value="ECO:0007669"/>
    <property type="project" value="UniProtKB-KW"/>
</dbReference>
<dbReference type="GO" id="GO:0005524">
    <property type="term" value="F:ATP binding"/>
    <property type="evidence" value="ECO:0007669"/>
    <property type="project" value="UniProtKB-UniRule"/>
</dbReference>
<dbReference type="GO" id="GO:0016887">
    <property type="term" value="F:ATP hydrolysis activity"/>
    <property type="evidence" value="ECO:0007669"/>
    <property type="project" value="InterPro"/>
</dbReference>
<dbReference type="GO" id="GO:0046933">
    <property type="term" value="F:proton-transporting ATP synthase activity, rotational mechanism"/>
    <property type="evidence" value="ECO:0007669"/>
    <property type="project" value="UniProtKB-UniRule"/>
</dbReference>
<dbReference type="GO" id="GO:0042776">
    <property type="term" value="P:proton motive force-driven mitochondrial ATP synthesis"/>
    <property type="evidence" value="ECO:0007669"/>
    <property type="project" value="TreeGrafter"/>
</dbReference>
<dbReference type="CDD" id="cd18110">
    <property type="entry name" value="ATP-synt_F1_beta_C"/>
    <property type="match status" value="1"/>
</dbReference>
<dbReference type="CDD" id="cd18115">
    <property type="entry name" value="ATP-synt_F1_beta_N"/>
    <property type="match status" value="1"/>
</dbReference>
<dbReference type="CDD" id="cd01133">
    <property type="entry name" value="F1-ATPase_beta_CD"/>
    <property type="match status" value="1"/>
</dbReference>
<dbReference type="FunFam" id="1.10.1140.10:FF:000001">
    <property type="entry name" value="ATP synthase subunit beta"/>
    <property type="match status" value="1"/>
</dbReference>
<dbReference type="FunFam" id="3.40.50.300:FF:000004">
    <property type="entry name" value="ATP synthase subunit beta"/>
    <property type="match status" value="1"/>
</dbReference>
<dbReference type="FunFam" id="2.40.10.170:FF:000002">
    <property type="entry name" value="ATP synthase subunit beta, chloroplastic"/>
    <property type="match status" value="1"/>
</dbReference>
<dbReference type="Gene3D" id="2.40.10.170">
    <property type="match status" value="1"/>
</dbReference>
<dbReference type="Gene3D" id="1.10.1140.10">
    <property type="entry name" value="Bovine Mitochondrial F1-atpase, Atp Synthase Beta Chain, Chain D, domain 3"/>
    <property type="match status" value="1"/>
</dbReference>
<dbReference type="Gene3D" id="3.40.50.300">
    <property type="entry name" value="P-loop containing nucleotide triphosphate hydrolases"/>
    <property type="match status" value="1"/>
</dbReference>
<dbReference type="HAMAP" id="MF_01347">
    <property type="entry name" value="ATP_synth_beta_bact"/>
    <property type="match status" value="1"/>
</dbReference>
<dbReference type="InterPro" id="IPR003593">
    <property type="entry name" value="AAA+_ATPase"/>
</dbReference>
<dbReference type="InterPro" id="IPR055190">
    <property type="entry name" value="ATP-synt_VA_C"/>
</dbReference>
<dbReference type="InterPro" id="IPR005722">
    <property type="entry name" value="ATP_synth_F1_bsu"/>
</dbReference>
<dbReference type="InterPro" id="IPR020003">
    <property type="entry name" value="ATPase_a/bsu_AS"/>
</dbReference>
<dbReference type="InterPro" id="IPR050053">
    <property type="entry name" value="ATPase_alpha/beta_chains"/>
</dbReference>
<dbReference type="InterPro" id="IPR004100">
    <property type="entry name" value="ATPase_F1/V1/A1_a/bsu_N"/>
</dbReference>
<dbReference type="InterPro" id="IPR036121">
    <property type="entry name" value="ATPase_F1/V1/A1_a/bsu_N_sf"/>
</dbReference>
<dbReference type="InterPro" id="IPR000194">
    <property type="entry name" value="ATPase_F1/V1/A1_a/bsu_nucl-bd"/>
</dbReference>
<dbReference type="InterPro" id="IPR024034">
    <property type="entry name" value="ATPase_F1/V1_b/a_C"/>
</dbReference>
<dbReference type="InterPro" id="IPR027417">
    <property type="entry name" value="P-loop_NTPase"/>
</dbReference>
<dbReference type="NCBIfam" id="TIGR01039">
    <property type="entry name" value="atpD"/>
    <property type="match status" value="1"/>
</dbReference>
<dbReference type="PANTHER" id="PTHR15184">
    <property type="entry name" value="ATP SYNTHASE"/>
    <property type="match status" value="1"/>
</dbReference>
<dbReference type="PANTHER" id="PTHR15184:SF71">
    <property type="entry name" value="ATP SYNTHASE SUBUNIT BETA, MITOCHONDRIAL"/>
    <property type="match status" value="1"/>
</dbReference>
<dbReference type="Pfam" id="PF00006">
    <property type="entry name" value="ATP-synt_ab"/>
    <property type="match status" value="1"/>
</dbReference>
<dbReference type="Pfam" id="PF02874">
    <property type="entry name" value="ATP-synt_ab_N"/>
    <property type="match status" value="1"/>
</dbReference>
<dbReference type="Pfam" id="PF22919">
    <property type="entry name" value="ATP-synt_VA_C"/>
    <property type="match status" value="1"/>
</dbReference>
<dbReference type="SMART" id="SM00382">
    <property type="entry name" value="AAA"/>
    <property type="match status" value="1"/>
</dbReference>
<dbReference type="SUPFAM" id="SSF47917">
    <property type="entry name" value="C-terminal domain of alpha and beta subunits of F1 ATP synthase"/>
    <property type="match status" value="1"/>
</dbReference>
<dbReference type="SUPFAM" id="SSF50615">
    <property type="entry name" value="N-terminal domain of alpha and beta subunits of F1 ATP synthase"/>
    <property type="match status" value="1"/>
</dbReference>
<dbReference type="SUPFAM" id="SSF52540">
    <property type="entry name" value="P-loop containing nucleoside triphosphate hydrolases"/>
    <property type="match status" value="1"/>
</dbReference>
<dbReference type="PROSITE" id="PS00152">
    <property type="entry name" value="ATPASE_ALPHA_BETA"/>
    <property type="match status" value="1"/>
</dbReference>
<comment type="function">
    <text evidence="1">Produces ATP from ADP in the presence of a proton gradient across the membrane. The catalytic sites are hosted primarily by the beta subunits.</text>
</comment>
<comment type="catalytic activity">
    <reaction evidence="1">
        <text>ATP + H2O + 4 H(+)(in) = ADP + phosphate + 5 H(+)(out)</text>
        <dbReference type="Rhea" id="RHEA:57720"/>
        <dbReference type="ChEBI" id="CHEBI:15377"/>
        <dbReference type="ChEBI" id="CHEBI:15378"/>
        <dbReference type="ChEBI" id="CHEBI:30616"/>
        <dbReference type="ChEBI" id="CHEBI:43474"/>
        <dbReference type="ChEBI" id="CHEBI:456216"/>
        <dbReference type="EC" id="7.1.2.2"/>
    </reaction>
</comment>
<comment type="subunit">
    <text evidence="1">F-type ATPases have 2 components, CF(1) - the catalytic core - and CF(0) - the membrane proton channel. CF(1) has five subunits: alpha(3), beta(3), gamma(1), delta(1), epsilon(1). CF(0) has four main subunits: a(1), b(1), b'(1) and c(9-12).</text>
</comment>
<comment type="subcellular location">
    <subcellularLocation>
        <location evidence="1">Plastid</location>
        <location evidence="1">Chloroplast thylakoid membrane</location>
        <topology evidence="1">Peripheral membrane protein</topology>
    </subcellularLocation>
</comment>
<comment type="similarity">
    <text evidence="1">Belongs to the ATPase alpha/beta chains family.</text>
</comment>